<accession>P66566</accession>
<accession>Q97T69</accession>
<proteinExistence type="inferred from homology"/>
<evidence type="ECO:0000255" key="1">
    <source>
        <dbReference type="HAMAP-Rule" id="MF_01306"/>
    </source>
</evidence>
<evidence type="ECO:0000305" key="2"/>
<gene>
    <name evidence="1" type="primary">rpsD</name>
    <name type="ordered locus">spr0078</name>
</gene>
<protein>
    <recommendedName>
        <fullName evidence="1">Small ribosomal subunit protein uS4</fullName>
    </recommendedName>
    <alternativeName>
        <fullName evidence="2">30S ribosomal protein S4</fullName>
    </alternativeName>
</protein>
<dbReference type="EMBL" id="AE007317">
    <property type="protein sequence ID" value="AAK98882.1"/>
    <property type="molecule type" value="Genomic_DNA"/>
</dbReference>
<dbReference type="PIR" id="F97881">
    <property type="entry name" value="F97881"/>
</dbReference>
<dbReference type="RefSeq" id="NP_357672.1">
    <property type="nucleotide sequence ID" value="NC_003098.1"/>
</dbReference>
<dbReference type="RefSeq" id="WP_000092756.1">
    <property type="nucleotide sequence ID" value="NC_003098.1"/>
</dbReference>
<dbReference type="SMR" id="P66566"/>
<dbReference type="STRING" id="171101.spr0078"/>
<dbReference type="GeneID" id="93738707"/>
<dbReference type="KEGG" id="spr:spr0078"/>
<dbReference type="PATRIC" id="fig|171101.6.peg.93"/>
<dbReference type="eggNOG" id="COG0522">
    <property type="taxonomic scope" value="Bacteria"/>
</dbReference>
<dbReference type="HOGENOM" id="CLU_092403_0_1_9"/>
<dbReference type="PRO" id="PR:P66566"/>
<dbReference type="Proteomes" id="UP000000586">
    <property type="component" value="Chromosome"/>
</dbReference>
<dbReference type="GO" id="GO:0015935">
    <property type="term" value="C:small ribosomal subunit"/>
    <property type="evidence" value="ECO:0000318"/>
    <property type="project" value="GO_Central"/>
</dbReference>
<dbReference type="GO" id="GO:0019843">
    <property type="term" value="F:rRNA binding"/>
    <property type="evidence" value="ECO:0000318"/>
    <property type="project" value="GO_Central"/>
</dbReference>
<dbReference type="GO" id="GO:0003735">
    <property type="term" value="F:structural constituent of ribosome"/>
    <property type="evidence" value="ECO:0000318"/>
    <property type="project" value="GO_Central"/>
</dbReference>
<dbReference type="GO" id="GO:0042274">
    <property type="term" value="P:ribosomal small subunit biogenesis"/>
    <property type="evidence" value="ECO:0000318"/>
    <property type="project" value="GO_Central"/>
</dbReference>
<dbReference type="GO" id="GO:0006412">
    <property type="term" value="P:translation"/>
    <property type="evidence" value="ECO:0007669"/>
    <property type="project" value="UniProtKB-UniRule"/>
</dbReference>
<dbReference type="CDD" id="cd00165">
    <property type="entry name" value="S4"/>
    <property type="match status" value="1"/>
</dbReference>
<dbReference type="FunFam" id="1.10.1050.10:FF:000001">
    <property type="entry name" value="30S ribosomal protein S4"/>
    <property type="match status" value="1"/>
</dbReference>
<dbReference type="FunFam" id="3.10.290.10:FF:000001">
    <property type="entry name" value="30S ribosomal protein S4"/>
    <property type="match status" value="1"/>
</dbReference>
<dbReference type="Gene3D" id="1.10.1050.10">
    <property type="entry name" value="Ribosomal Protein S4 Delta 41, Chain A, domain 1"/>
    <property type="match status" value="1"/>
</dbReference>
<dbReference type="Gene3D" id="3.10.290.10">
    <property type="entry name" value="RNA-binding S4 domain"/>
    <property type="match status" value="1"/>
</dbReference>
<dbReference type="HAMAP" id="MF_01306_B">
    <property type="entry name" value="Ribosomal_uS4_B"/>
    <property type="match status" value="1"/>
</dbReference>
<dbReference type="InterPro" id="IPR022801">
    <property type="entry name" value="Ribosomal_uS4"/>
</dbReference>
<dbReference type="InterPro" id="IPR005709">
    <property type="entry name" value="Ribosomal_uS4_bac-type"/>
</dbReference>
<dbReference type="InterPro" id="IPR018079">
    <property type="entry name" value="Ribosomal_uS4_CS"/>
</dbReference>
<dbReference type="InterPro" id="IPR001912">
    <property type="entry name" value="Ribosomal_uS4_N"/>
</dbReference>
<dbReference type="InterPro" id="IPR002942">
    <property type="entry name" value="S4_RNA-bd"/>
</dbReference>
<dbReference type="InterPro" id="IPR036986">
    <property type="entry name" value="S4_RNA-bd_sf"/>
</dbReference>
<dbReference type="NCBIfam" id="NF003717">
    <property type="entry name" value="PRK05327.1"/>
    <property type="match status" value="1"/>
</dbReference>
<dbReference type="NCBIfam" id="TIGR01017">
    <property type="entry name" value="rpsD_bact"/>
    <property type="match status" value="1"/>
</dbReference>
<dbReference type="PANTHER" id="PTHR11831">
    <property type="entry name" value="30S 40S RIBOSOMAL PROTEIN"/>
    <property type="match status" value="1"/>
</dbReference>
<dbReference type="PANTHER" id="PTHR11831:SF4">
    <property type="entry name" value="SMALL RIBOSOMAL SUBUNIT PROTEIN US4M"/>
    <property type="match status" value="1"/>
</dbReference>
<dbReference type="Pfam" id="PF00163">
    <property type="entry name" value="Ribosomal_S4"/>
    <property type="match status" value="1"/>
</dbReference>
<dbReference type="Pfam" id="PF01479">
    <property type="entry name" value="S4"/>
    <property type="match status" value="1"/>
</dbReference>
<dbReference type="SMART" id="SM01390">
    <property type="entry name" value="Ribosomal_S4"/>
    <property type="match status" value="1"/>
</dbReference>
<dbReference type="SMART" id="SM00363">
    <property type="entry name" value="S4"/>
    <property type="match status" value="1"/>
</dbReference>
<dbReference type="SUPFAM" id="SSF55174">
    <property type="entry name" value="Alpha-L RNA-binding motif"/>
    <property type="match status" value="1"/>
</dbReference>
<dbReference type="PROSITE" id="PS00632">
    <property type="entry name" value="RIBOSOMAL_S4"/>
    <property type="match status" value="1"/>
</dbReference>
<dbReference type="PROSITE" id="PS50889">
    <property type="entry name" value="S4"/>
    <property type="match status" value="1"/>
</dbReference>
<comment type="function">
    <text evidence="1">One of the primary rRNA binding proteins, it binds directly to 16S rRNA where it nucleates assembly of the body of the 30S subunit.</text>
</comment>
<comment type="function">
    <text evidence="1">With S5 and S12 plays an important role in translational accuracy.</text>
</comment>
<comment type="subunit">
    <text evidence="1">Part of the 30S ribosomal subunit. Contacts protein S5. The interaction surface between S4 and S5 is involved in control of translational fidelity.</text>
</comment>
<comment type="similarity">
    <text evidence="1">Belongs to the universal ribosomal protein uS4 family.</text>
</comment>
<reference key="1">
    <citation type="journal article" date="2001" name="J. Bacteriol.">
        <title>Genome of the bacterium Streptococcus pneumoniae strain R6.</title>
        <authorList>
            <person name="Hoskins J."/>
            <person name="Alborn W.E. Jr."/>
            <person name="Arnold J."/>
            <person name="Blaszczak L.C."/>
            <person name="Burgett S."/>
            <person name="DeHoff B.S."/>
            <person name="Estrem S.T."/>
            <person name="Fritz L."/>
            <person name="Fu D.-J."/>
            <person name="Fuller W."/>
            <person name="Geringer C."/>
            <person name="Gilmour R."/>
            <person name="Glass J.S."/>
            <person name="Khoja H."/>
            <person name="Kraft A.R."/>
            <person name="Lagace R.E."/>
            <person name="LeBlanc D.J."/>
            <person name="Lee L.N."/>
            <person name="Lefkowitz E.J."/>
            <person name="Lu J."/>
            <person name="Matsushima P."/>
            <person name="McAhren S.M."/>
            <person name="McHenney M."/>
            <person name="McLeaster K."/>
            <person name="Mundy C.W."/>
            <person name="Nicas T.I."/>
            <person name="Norris F.H."/>
            <person name="O'Gara M."/>
            <person name="Peery R.B."/>
            <person name="Robertson G.T."/>
            <person name="Rockey P."/>
            <person name="Sun P.-M."/>
            <person name="Winkler M.E."/>
            <person name="Yang Y."/>
            <person name="Young-Bellido M."/>
            <person name="Zhao G."/>
            <person name="Zook C.A."/>
            <person name="Baltz R.H."/>
            <person name="Jaskunas S.R."/>
            <person name="Rosteck P.R. Jr."/>
            <person name="Skatrud P.L."/>
            <person name="Glass J.I."/>
        </authorList>
    </citation>
    <scope>NUCLEOTIDE SEQUENCE [LARGE SCALE GENOMIC DNA]</scope>
    <source>
        <strain>ATCC BAA-255 / R6</strain>
    </source>
</reference>
<organism>
    <name type="scientific">Streptococcus pneumoniae (strain ATCC BAA-255 / R6)</name>
    <dbReference type="NCBI Taxonomy" id="171101"/>
    <lineage>
        <taxon>Bacteria</taxon>
        <taxon>Bacillati</taxon>
        <taxon>Bacillota</taxon>
        <taxon>Bacilli</taxon>
        <taxon>Lactobacillales</taxon>
        <taxon>Streptococcaceae</taxon>
        <taxon>Streptococcus</taxon>
    </lineage>
</organism>
<name>RS4_STRR6</name>
<feature type="chain" id="PRO_0000132472" description="Small ribosomal subunit protein uS4">
    <location>
        <begin position="1"/>
        <end position="203"/>
    </location>
</feature>
<feature type="domain" description="S4 RNA-binding" evidence="1">
    <location>
        <begin position="93"/>
        <end position="156"/>
    </location>
</feature>
<keyword id="KW-1185">Reference proteome</keyword>
<keyword id="KW-0687">Ribonucleoprotein</keyword>
<keyword id="KW-0689">Ribosomal protein</keyword>
<keyword id="KW-0694">RNA-binding</keyword>
<keyword id="KW-0699">rRNA-binding</keyword>
<sequence length="203" mass="23029">MSRYTGPSWKQARRLGLSLTGTGKELARRNYVPGQHGPNNRSKLSEYGLQLAEKQKLRFTYGVGEKQFRNLFVQATKIKGGILGFNFMLLLERRLDNVVYRLGLATTRRQARQFVNHGHILVDGKRVDIPSYRVTPGQVISVREKSLKVPAILEAVEATLGRPAFVSFDAEKLEGSLTRLPERDEINPEINEALVVEFYNKML</sequence>